<dbReference type="EMBL" id="BC071603">
    <property type="protein sequence ID" value="AAH71603.1"/>
    <property type="molecule type" value="mRNA"/>
</dbReference>
<dbReference type="EMBL" id="AK000589">
    <property type="protein sequence ID" value="BAA91274.1"/>
    <property type="status" value="ALT_TERM"/>
    <property type="molecule type" value="mRNA"/>
</dbReference>
<dbReference type="EMBL" id="AK131433">
    <property type="protein sequence ID" value="BAD18579.1"/>
    <property type="status" value="ALT_INIT"/>
    <property type="molecule type" value="mRNA"/>
</dbReference>
<dbReference type="CCDS" id="CCDS10042.1"/>
<dbReference type="RefSeq" id="NP_054825.2">
    <property type="nucleotide sequence ID" value="NM_014106.3"/>
</dbReference>
<dbReference type="RefSeq" id="XP_011520046.1">
    <property type="nucleotide sequence ID" value="XM_011521744.4"/>
</dbReference>
<dbReference type="RefSeq" id="XP_054234321.1">
    <property type="nucleotide sequence ID" value="XM_054378346.1"/>
</dbReference>
<dbReference type="SMR" id="Q6IQ21"/>
<dbReference type="BioGRID" id="120324">
    <property type="interactions" value="107"/>
</dbReference>
<dbReference type="FunCoup" id="Q6IQ21">
    <property type="interactions" value="1098"/>
</dbReference>
<dbReference type="IntAct" id="Q6IQ21">
    <property type="interactions" value="89"/>
</dbReference>
<dbReference type="MINT" id="Q6IQ21"/>
<dbReference type="STRING" id="9606.ENSP00000348673"/>
<dbReference type="GlyGen" id="Q6IQ21">
    <property type="glycosylation" value="1 site, 1 O-linked glycan (1 site)"/>
</dbReference>
<dbReference type="iPTMnet" id="Q6IQ21"/>
<dbReference type="PhosphoSitePlus" id="Q6IQ21"/>
<dbReference type="SwissPalm" id="Q6IQ21"/>
<dbReference type="BioMuta" id="ZNF770"/>
<dbReference type="DMDM" id="74757996"/>
<dbReference type="jPOST" id="Q6IQ21"/>
<dbReference type="MassIVE" id="Q6IQ21"/>
<dbReference type="PaxDb" id="9606-ENSP00000348673"/>
<dbReference type="PeptideAtlas" id="Q6IQ21"/>
<dbReference type="ProteomicsDB" id="66477"/>
<dbReference type="Pumba" id="Q6IQ21"/>
<dbReference type="Antibodypedia" id="9792">
    <property type="antibodies" value="12 antibodies from 9 providers"/>
</dbReference>
<dbReference type="DNASU" id="54989"/>
<dbReference type="Ensembl" id="ENST00000356321.4">
    <property type="protein sequence ID" value="ENSP00000348673.4"/>
    <property type="gene ID" value="ENSG00000198146.4"/>
</dbReference>
<dbReference type="GeneID" id="54989"/>
<dbReference type="KEGG" id="hsa:54989"/>
<dbReference type="MANE-Select" id="ENST00000356321.4">
    <property type="protein sequence ID" value="ENSP00000348673.4"/>
    <property type="RefSeq nucleotide sequence ID" value="NM_014106.4"/>
    <property type="RefSeq protein sequence ID" value="NP_054825.2"/>
</dbReference>
<dbReference type="UCSC" id="uc001ziw.4">
    <property type="organism name" value="human"/>
</dbReference>
<dbReference type="AGR" id="HGNC:26061"/>
<dbReference type="CTD" id="54989"/>
<dbReference type="GeneCards" id="ZNF770"/>
<dbReference type="HGNC" id="HGNC:26061">
    <property type="gene designation" value="ZNF770"/>
</dbReference>
<dbReference type="HPA" id="ENSG00000198146">
    <property type="expression patterns" value="Low tissue specificity"/>
</dbReference>
<dbReference type="neXtProt" id="NX_Q6IQ21"/>
<dbReference type="OpenTargets" id="ENSG00000198146"/>
<dbReference type="PharmGKB" id="PA162410336"/>
<dbReference type="VEuPathDB" id="HostDB:ENSG00000198146"/>
<dbReference type="eggNOG" id="KOG1721">
    <property type="taxonomic scope" value="Eukaryota"/>
</dbReference>
<dbReference type="GeneTree" id="ENSGT00940000161963"/>
<dbReference type="HOGENOM" id="CLU_002678_44_7_1"/>
<dbReference type="InParanoid" id="Q6IQ21"/>
<dbReference type="OMA" id="SWQKHFQ"/>
<dbReference type="OrthoDB" id="8113227at2759"/>
<dbReference type="PAN-GO" id="Q6IQ21">
    <property type="GO annotations" value="4 GO annotations based on evolutionary models"/>
</dbReference>
<dbReference type="PhylomeDB" id="Q6IQ21"/>
<dbReference type="TreeFam" id="TF335560"/>
<dbReference type="PathwayCommons" id="Q6IQ21"/>
<dbReference type="Reactome" id="R-HSA-212436">
    <property type="pathway name" value="Generic Transcription Pathway"/>
</dbReference>
<dbReference type="SignaLink" id="Q6IQ21"/>
<dbReference type="BioGRID-ORCS" id="54989">
    <property type="hits" value="9 hits in 1146 CRISPR screens"/>
</dbReference>
<dbReference type="GenomeRNAi" id="54989"/>
<dbReference type="Pharos" id="Q6IQ21">
    <property type="development level" value="Tdark"/>
</dbReference>
<dbReference type="PRO" id="PR:Q6IQ21"/>
<dbReference type="Proteomes" id="UP000005640">
    <property type="component" value="Chromosome 15"/>
</dbReference>
<dbReference type="RNAct" id="Q6IQ21">
    <property type="molecule type" value="protein"/>
</dbReference>
<dbReference type="Bgee" id="ENSG00000198146">
    <property type="expression patterns" value="Expressed in upper arm skin and 196 other cell types or tissues"/>
</dbReference>
<dbReference type="ExpressionAtlas" id="Q6IQ21">
    <property type="expression patterns" value="baseline and differential"/>
</dbReference>
<dbReference type="GO" id="GO:0005634">
    <property type="term" value="C:nucleus"/>
    <property type="evidence" value="ECO:0000318"/>
    <property type="project" value="GO_Central"/>
</dbReference>
<dbReference type="GO" id="GO:0003677">
    <property type="term" value="F:DNA binding"/>
    <property type="evidence" value="ECO:0007669"/>
    <property type="project" value="UniProtKB-KW"/>
</dbReference>
<dbReference type="GO" id="GO:0008270">
    <property type="term" value="F:zinc ion binding"/>
    <property type="evidence" value="ECO:0007669"/>
    <property type="project" value="UniProtKB-KW"/>
</dbReference>
<dbReference type="GO" id="GO:0006357">
    <property type="term" value="P:regulation of transcription by RNA polymerase II"/>
    <property type="evidence" value="ECO:0000318"/>
    <property type="project" value="GO_Central"/>
</dbReference>
<dbReference type="FunFam" id="3.30.160.60:FF:002212">
    <property type="entry name" value="Zinc finger protein 672"/>
    <property type="match status" value="1"/>
</dbReference>
<dbReference type="FunFam" id="3.30.160.60:FF:000286">
    <property type="entry name" value="Zinc finger protein 770"/>
    <property type="match status" value="1"/>
</dbReference>
<dbReference type="FunFam" id="3.30.160.60:FF:000904">
    <property type="entry name" value="Zinc finger protein 770"/>
    <property type="match status" value="1"/>
</dbReference>
<dbReference type="FunFam" id="3.30.160.60:FF:000978">
    <property type="entry name" value="Zinc finger protein 770"/>
    <property type="match status" value="1"/>
</dbReference>
<dbReference type="FunFam" id="3.30.160.60:FF:001194">
    <property type="entry name" value="Zinc finger protein 770"/>
    <property type="match status" value="1"/>
</dbReference>
<dbReference type="FunFam" id="3.30.160.60:FF:001196">
    <property type="entry name" value="Zinc finger protein 770"/>
    <property type="match status" value="1"/>
</dbReference>
<dbReference type="FunFam" id="3.30.160.60:FF:001860">
    <property type="entry name" value="Zinc finger protein 770"/>
    <property type="match status" value="1"/>
</dbReference>
<dbReference type="FunFam" id="3.30.160.60:FF:002585">
    <property type="entry name" value="Zinc finger protein 770"/>
    <property type="match status" value="1"/>
</dbReference>
<dbReference type="Gene3D" id="3.30.160.60">
    <property type="entry name" value="Classic Zinc Finger"/>
    <property type="match status" value="9"/>
</dbReference>
<dbReference type="InterPro" id="IPR036236">
    <property type="entry name" value="Znf_C2H2_sf"/>
</dbReference>
<dbReference type="InterPro" id="IPR013087">
    <property type="entry name" value="Znf_C2H2_type"/>
</dbReference>
<dbReference type="PANTHER" id="PTHR24408">
    <property type="entry name" value="ZINC FINGER PROTEIN"/>
    <property type="match status" value="1"/>
</dbReference>
<dbReference type="PANTHER" id="PTHR24408:SF34">
    <property type="entry name" value="ZINC FINGER PROTEIN 672-RELATED"/>
    <property type="match status" value="1"/>
</dbReference>
<dbReference type="Pfam" id="PF00096">
    <property type="entry name" value="zf-C2H2"/>
    <property type="match status" value="8"/>
</dbReference>
<dbReference type="SMART" id="SM00355">
    <property type="entry name" value="ZnF_C2H2"/>
    <property type="match status" value="11"/>
</dbReference>
<dbReference type="SUPFAM" id="SSF57667">
    <property type="entry name" value="beta-beta-alpha zinc fingers"/>
    <property type="match status" value="6"/>
</dbReference>
<dbReference type="PROSITE" id="PS00028">
    <property type="entry name" value="ZINC_FINGER_C2H2_1"/>
    <property type="match status" value="10"/>
</dbReference>
<dbReference type="PROSITE" id="PS50157">
    <property type="entry name" value="ZINC_FINGER_C2H2_2"/>
    <property type="match status" value="11"/>
</dbReference>
<comment type="function">
    <text>May be involved in transcriptional regulation.</text>
</comment>
<comment type="subcellular location">
    <subcellularLocation>
        <location evidence="3">Nucleus</location>
    </subcellularLocation>
</comment>
<comment type="similarity">
    <text evidence="3">Belongs to the krueppel C2H2-type zinc-finger protein family.</text>
</comment>
<comment type="sequence caution" evidence="3">
    <conflict type="erroneous initiation">
        <sequence resource="EMBL-CDS" id="BAD18579"/>
    </conflict>
</comment>
<accession>Q6IQ21</accession>
<accession>Q6ZMZ6</accession>
<accession>Q9NWV2</accession>
<protein>
    <recommendedName>
        <fullName>Zinc finger protein 770</fullName>
    </recommendedName>
</protein>
<organism>
    <name type="scientific">Homo sapiens</name>
    <name type="common">Human</name>
    <dbReference type="NCBI Taxonomy" id="9606"/>
    <lineage>
        <taxon>Eukaryota</taxon>
        <taxon>Metazoa</taxon>
        <taxon>Chordata</taxon>
        <taxon>Craniata</taxon>
        <taxon>Vertebrata</taxon>
        <taxon>Euteleostomi</taxon>
        <taxon>Mammalia</taxon>
        <taxon>Eutheria</taxon>
        <taxon>Euarchontoglires</taxon>
        <taxon>Primates</taxon>
        <taxon>Haplorrhini</taxon>
        <taxon>Catarrhini</taxon>
        <taxon>Hominidae</taxon>
        <taxon>Homo</taxon>
    </lineage>
</organism>
<evidence type="ECO:0000255" key="1">
    <source>
        <dbReference type="PROSITE-ProRule" id="PRU00042"/>
    </source>
</evidence>
<evidence type="ECO:0000256" key="2">
    <source>
        <dbReference type="SAM" id="MobiDB-lite"/>
    </source>
</evidence>
<evidence type="ECO:0000305" key="3"/>
<evidence type="ECO:0007744" key="4">
    <source>
    </source>
</evidence>
<feature type="chain" id="PRO_0000280436" description="Zinc finger protein 770">
    <location>
        <begin position="1"/>
        <end position="691"/>
    </location>
</feature>
<feature type="zinc finger region" description="C2H2-type 1" evidence="1">
    <location>
        <begin position="27"/>
        <end position="49"/>
    </location>
</feature>
<feature type="zinc finger region" description="C2H2-type 2" evidence="1">
    <location>
        <begin position="55"/>
        <end position="77"/>
    </location>
</feature>
<feature type="zinc finger region" description="C2H2-type 3" evidence="1">
    <location>
        <begin position="81"/>
        <end position="103"/>
    </location>
</feature>
<feature type="zinc finger region" description="C2H2-type 4" evidence="1">
    <location>
        <begin position="160"/>
        <end position="182"/>
    </location>
</feature>
<feature type="zinc finger region" description="C2H2-type 5" evidence="1">
    <location>
        <begin position="188"/>
        <end position="210"/>
    </location>
</feature>
<feature type="zinc finger region" description="C2H2-type 6" evidence="1">
    <location>
        <begin position="216"/>
        <end position="238"/>
    </location>
</feature>
<feature type="zinc finger region" description="C2H2-type 7; degenerate" evidence="1">
    <location>
        <begin position="294"/>
        <end position="318"/>
    </location>
</feature>
<feature type="zinc finger region" description="C2H2-type 8" evidence="1">
    <location>
        <begin position="475"/>
        <end position="497"/>
    </location>
</feature>
<feature type="zinc finger region" description="C2H2-type 9" evidence="1">
    <location>
        <begin position="503"/>
        <end position="525"/>
    </location>
</feature>
<feature type="zinc finger region" description="C2H2-type 10" evidence="1">
    <location>
        <begin position="625"/>
        <end position="647"/>
    </location>
</feature>
<feature type="zinc finger region" description="C2H2-type 11" evidence="1">
    <location>
        <begin position="653"/>
        <end position="675"/>
    </location>
</feature>
<feature type="region of interest" description="Disordered" evidence="2">
    <location>
        <begin position="258"/>
        <end position="277"/>
    </location>
</feature>
<feature type="cross-link" description="Glycyl lysine isopeptide (Lys-Gly) (interchain with G-Cter in SUMO2)" evidence="4">
    <location>
        <position position="11"/>
    </location>
</feature>
<feature type="cross-link" description="Glycyl lysine isopeptide (Lys-Gly) (interchain with G-Cter in SUMO2)" evidence="4">
    <location>
        <position position="112"/>
    </location>
</feature>
<feature type="cross-link" description="Glycyl lysine isopeptide (Lys-Gly) (interchain with G-Cter in SUMO2)" evidence="4">
    <location>
        <position position="121"/>
    </location>
</feature>
<feature type="cross-link" description="Glycyl lysine isopeptide (Lys-Gly) (interchain with G-Cter in SUMO2)" evidence="4">
    <location>
        <position position="146"/>
    </location>
</feature>
<feature type="cross-link" description="Glycyl lysine isopeptide (Lys-Gly) (interchain with G-Cter in SUMO2)" evidence="4">
    <location>
        <position position="262"/>
    </location>
</feature>
<feature type="cross-link" description="Glycyl lysine isopeptide (Lys-Gly) (interchain with G-Cter in SUMO2)" evidence="4">
    <location>
        <position position="420"/>
    </location>
</feature>
<feature type="cross-link" description="Glycyl lysine isopeptide (Lys-Gly) (interchain with G-Cter in SUMO2)" evidence="4">
    <location>
        <position position="437"/>
    </location>
</feature>
<feature type="cross-link" description="Glycyl lysine isopeptide (Lys-Gly) (interchain with G-Cter in SUMO2)" evidence="4">
    <location>
        <position position="683"/>
    </location>
</feature>
<feature type="sequence conflict" description="In Ref. 2; BAA91274." evidence="3" ref="2">
    <original>P</original>
    <variation>L</variation>
    <location>
        <position position="22"/>
    </location>
</feature>
<reference key="1">
    <citation type="journal article" date="2004" name="Genome Res.">
        <title>The status, quality, and expansion of the NIH full-length cDNA project: the Mammalian Gene Collection (MGC).</title>
        <authorList>
            <consortium name="The MGC Project Team"/>
        </authorList>
    </citation>
    <scope>NUCLEOTIDE SEQUENCE [LARGE SCALE MRNA]</scope>
    <source>
        <tissue>Placenta</tissue>
    </source>
</reference>
<reference key="2">
    <citation type="journal article" date="2004" name="Nat. Genet.">
        <title>Complete sequencing and characterization of 21,243 full-length human cDNAs.</title>
        <authorList>
            <person name="Ota T."/>
            <person name="Suzuki Y."/>
            <person name="Nishikawa T."/>
            <person name="Otsuki T."/>
            <person name="Sugiyama T."/>
            <person name="Irie R."/>
            <person name="Wakamatsu A."/>
            <person name="Hayashi K."/>
            <person name="Sato H."/>
            <person name="Nagai K."/>
            <person name="Kimura K."/>
            <person name="Makita H."/>
            <person name="Sekine M."/>
            <person name="Obayashi M."/>
            <person name="Nishi T."/>
            <person name="Shibahara T."/>
            <person name="Tanaka T."/>
            <person name="Ishii S."/>
            <person name="Yamamoto J."/>
            <person name="Saito K."/>
            <person name="Kawai Y."/>
            <person name="Isono Y."/>
            <person name="Nakamura Y."/>
            <person name="Nagahari K."/>
            <person name="Murakami K."/>
            <person name="Yasuda T."/>
            <person name="Iwayanagi T."/>
            <person name="Wagatsuma M."/>
            <person name="Shiratori A."/>
            <person name="Sudo H."/>
            <person name="Hosoiri T."/>
            <person name="Kaku Y."/>
            <person name="Kodaira H."/>
            <person name="Kondo H."/>
            <person name="Sugawara M."/>
            <person name="Takahashi M."/>
            <person name="Kanda K."/>
            <person name="Yokoi T."/>
            <person name="Furuya T."/>
            <person name="Kikkawa E."/>
            <person name="Omura Y."/>
            <person name="Abe K."/>
            <person name="Kamihara K."/>
            <person name="Katsuta N."/>
            <person name="Sato K."/>
            <person name="Tanikawa M."/>
            <person name="Yamazaki M."/>
            <person name="Ninomiya K."/>
            <person name="Ishibashi T."/>
            <person name="Yamashita H."/>
            <person name="Murakawa K."/>
            <person name="Fujimori K."/>
            <person name="Tanai H."/>
            <person name="Kimata M."/>
            <person name="Watanabe M."/>
            <person name="Hiraoka S."/>
            <person name="Chiba Y."/>
            <person name="Ishida S."/>
            <person name="Ono Y."/>
            <person name="Takiguchi S."/>
            <person name="Watanabe S."/>
            <person name="Yosida M."/>
            <person name="Hotuta T."/>
            <person name="Kusano J."/>
            <person name="Kanehori K."/>
            <person name="Takahashi-Fujii A."/>
            <person name="Hara H."/>
            <person name="Tanase T.-O."/>
            <person name="Nomura Y."/>
            <person name="Togiya S."/>
            <person name="Komai F."/>
            <person name="Hara R."/>
            <person name="Takeuchi K."/>
            <person name="Arita M."/>
            <person name="Imose N."/>
            <person name="Musashino K."/>
            <person name="Yuuki H."/>
            <person name="Oshima A."/>
            <person name="Sasaki N."/>
            <person name="Aotsuka S."/>
            <person name="Yoshikawa Y."/>
            <person name="Matsunawa H."/>
            <person name="Ichihara T."/>
            <person name="Shiohata N."/>
            <person name="Sano S."/>
            <person name="Moriya S."/>
            <person name="Momiyama H."/>
            <person name="Satoh N."/>
            <person name="Takami S."/>
            <person name="Terashima Y."/>
            <person name="Suzuki O."/>
            <person name="Nakagawa S."/>
            <person name="Senoh A."/>
            <person name="Mizoguchi H."/>
            <person name="Goto Y."/>
            <person name="Shimizu F."/>
            <person name="Wakebe H."/>
            <person name="Hishigaki H."/>
            <person name="Watanabe T."/>
            <person name="Sugiyama A."/>
            <person name="Takemoto M."/>
            <person name="Kawakami B."/>
            <person name="Yamazaki M."/>
            <person name="Watanabe K."/>
            <person name="Kumagai A."/>
            <person name="Itakura S."/>
            <person name="Fukuzumi Y."/>
            <person name="Fujimori Y."/>
            <person name="Komiyama M."/>
            <person name="Tashiro H."/>
            <person name="Tanigami A."/>
            <person name="Fujiwara T."/>
            <person name="Ono T."/>
            <person name="Yamada K."/>
            <person name="Fujii Y."/>
            <person name="Ozaki K."/>
            <person name="Hirao M."/>
            <person name="Ohmori Y."/>
            <person name="Kawabata A."/>
            <person name="Hikiji T."/>
            <person name="Kobatake N."/>
            <person name="Inagaki H."/>
            <person name="Ikema Y."/>
            <person name="Okamoto S."/>
            <person name="Okitani R."/>
            <person name="Kawakami T."/>
            <person name="Noguchi S."/>
            <person name="Itoh T."/>
            <person name="Shigeta K."/>
            <person name="Senba T."/>
            <person name="Matsumura K."/>
            <person name="Nakajima Y."/>
            <person name="Mizuno T."/>
            <person name="Morinaga M."/>
            <person name="Sasaki M."/>
            <person name="Togashi T."/>
            <person name="Oyama M."/>
            <person name="Hata H."/>
            <person name="Watanabe M."/>
            <person name="Komatsu T."/>
            <person name="Mizushima-Sugano J."/>
            <person name="Satoh T."/>
            <person name="Shirai Y."/>
            <person name="Takahashi Y."/>
            <person name="Nakagawa K."/>
            <person name="Okumura K."/>
            <person name="Nagase T."/>
            <person name="Nomura N."/>
            <person name="Kikuchi H."/>
            <person name="Masuho Y."/>
            <person name="Yamashita R."/>
            <person name="Nakai K."/>
            <person name="Yada T."/>
            <person name="Nakamura Y."/>
            <person name="Ohara O."/>
            <person name="Isogai T."/>
            <person name="Sugano S."/>
        </authorList>
    </citation>
    <scope>NUCLEOTIDE SEQUENCE [LARGE SCALE MRNA] OF 1-181 AND 259-691</scope>
    <source>
        <tissue>Carcinoma</tissue>
        <tissue>Synovium</tissue>
    </source>
</reference>
<reference key="3">
    <citation type="journal article" date="2017" name="Nat. Struct. Mol. Biol.">
        <title>Site-specific mapping of the human SUMO proteome reveals co-modification with phosphorylation.</title>
        <authorList>
            <person name="Hendriks I.A."/>
            <person name="Lyon D."/>
            <person name="Young C."/>
            <person name="Jensen L.J."/>
            <person name="Vertegaal A.C."/>
            <person name="Nielsen M.L."/>
        </authorList>
    </citation>
    <scope>SUMOYLATION [LARGE SCALE ANALYSIS] AT LYS-11; LYS-112; LYS-121; LYS-146; LYS-262; LYS-420; LYS-437 AND LYS-683</scope>
    <scope>IDENTIFICATION BY MASS SPECTROMETRY [LARGE SCALE ANALYSIS]</scope>
</reference>
<keyword id="KW-0238">DNA-binding</keyword>
<keyword id="KW-1017">Isopeptide bond</keyword>
<keyword id="KW-0479">Metal-binding</keyword>
<keyword id="KW-0539">Nucleus</keyword>
<keyword id="KW-1267">Proteomics identification</keyword>
<keyword id="KW-1185">Reference proteome</keyword>
<keyword id="KW-0677">Repeat</keyword>
<keyword id="KW-0804">Transcription</keyword>
<keyword id="KW-0805">Transcription regulation</keyword>
<keyword id="KW-0832">Ubl conjugation</keyword>
<keyword id="KW-0862">Zinc</keyword>
<keyword id="KW-0863">Zinc-finger</keyword>
<proteinExistence type="evidence at protein level"/>
<gene>
    <name type="primary">ZNF770</name>
</gene>
<name>ZN770_HUMAN</name>
<sequence length="691" mass="80007">MMAENNLKMLKIQQCVVANKLPRNRPYVCNICFKHFETPSKLARHYLIHTGQKPFECDVCHKTFRQLVHLERHQLTHSLPFKCSICQRHFKNLKTFVKHQQLHNETYQNNVKQVRRLLEAKQEKSMYGVYNTFTTEERWALHPCSKSDPMYSMKRRKNIHACTICGKMFPSQSKLDRHVLIHTGQRPFKCVLCTKSFRQSTHLKIHQLTHSEERPFQCCFCQKGFKIQSKLLKHKQIHTRNKAFRALLLKKRRTESRPLPNKLNANQGGFENGEIGESEENNPLDVHSIYIVPFQCPKCEKCFESEQILNEHSCFAARSGKIPSRFKRSYNYKTIVKKILAKLKRARSKKLDNFQSEKKVFKKSFLRNCDLISGEQSSEQTQRTFVGSLGKHGTYKTIGNRKKKTLTLPFSWQNMGKNLKGILTTENILSIDNSVNKKDLSICGSSGEEFFNNCEVLQCGFSVPRENIRTRHKICPCDKCEKVFPSISKLKRHYLIHTGQRPFGCNICGKSFRQSAHLKRHEQTHNEKSPYASLCQVEFGNFNNLSNHSGNNVNYNASQQCQAPGVQKYEVSESDQMSGVKAESQDFIPGSTGQPCLPNVLLESEQSNPFCSYSEHQEKNDVFLYRCSVCAKSFRSPSKLERHYLIHAGQKPFECSVCGKTFRQAPHWKRHQLTHFKERPQGKVVALDSVM</sequence>